<gene>
    <name evidence="1" type="primary">ruvA</name>
    <name type="ordered locus">BH0023</name>
</gene>
<dbReference type="EMBL" id="CP000048">
    <property type="protein sequence ID" value="AAX16549.1"/>
    <property type="molecule type" value="Genomic_DNA"/>
</dbReference>
<dbReference type="RefSeq" id="WP_012421806.1">
    <property type="nucleotide sequence ID" value="NZ_CP073136.1"/>
</dbReference>
<dbReference type="SMR" id="B2S1L2"/>
<dbReference type="KEGG" id="bhr:BH0023"/>
<dbReference type="HOGENOM" id="CLU_087936_2_0_12"/>
<dbReference type="Proteomes" id="UP000008834">
    <property type="component" value="Chromosome"/>
</dbReference>
<dbReference type="GO" id="GO:0005737">
    <property type="term" value="C:cytoplasm"/>
    <property type="evidence" value="ECO:0007669"/>
    <property type="project" value="UniProtKB-SubCell"/>
</dbReference>
<dbReference type="GO" id="GO:0048476">
    <property type="term" value="C:Holliday junction resolvase complex"/>
    <property type="evidence" value="ECO:0007669"/>
    <property type="project" value="UniProtKB-UniRule"/>
</dbReference>
<dbReference type="GO" id="GO:0005524">
    <property type="term" value="F:ATP binding"/>
    <property type="evidence" value="ECO:0007669"/>
    <property type="project" value="InterPro"/>
</dbReference>
<dbReference type="GO" id="GO:0000400">
    <property type="term" value="F:four-way junction DNA binding"/>
    <property type="evidence" value="ECO:0007669"/>
    <property type="project" value="UniProtKB-UniRule"/>
</dbReference>
<dbReference type="GO" id="GO:0009378">
    <property type="term" value="F:four-way junction helicase activity"/>
    <property type="evidence" value="ECO:0007669"/>
    <property type="project" value="InterPro"/>
</dbReference>
<dbReference type="GO" id="GO:0006310">
    <property type="term" value="P:DNA recombination"/>
    <property type="evidence" value="ECO:0007669"/>
    <property type="project" value="UniProtKB-UniRule"/>
</dbReference>
<dbReference type="GO" id="GO:0006281">
    <property type="term" value="P:DNA repair"/>
    <property type="evidence" value="ECO:0007669"/>
    <property type="project" value="UniProtKB-UniRule"/>
</dbReference>
<dbReference type="Gene3D" id="1.10.150.20">
    <property type="entry name" value="5' to 3' exonuclease, C-terminal subdomain"/>
    <property type="match status" value="1"/>
</dbReference>
<dbReference type="Gene3D" id="2.40.50.140">
    <property type="entry name" value="Nucleic acid-binding proteins"/>
    <property type="match status" value="1"/>
</dbReference>
<dbReference type="HAMAP" id="MF_00031">
    <property type="entry name" value="DNA_HJ_migration_RuvA"/>
    <property type="match status" value="1"/>
</dbReference>
<dbReference type="InterPro" id="IPR013849">
    <property type="entry name" value="DNA_helicase_Holl-junc_RuvA_I"/>
</dbReference>
<dbReference type="InterPro" id="IPR003583">
    <property type="entry name" value="Hlx-hairpin-Hlx_DNA-bd_motif"/>
</dbReference>
<dbReference type="InterPro" id="IPR012340">
    <property type="entry name" value="NA-bd_OB-fold"/>
</dbReference>
<dbReference type="InterPro" id="IPR000085">
    <property type="entry name" value="RuvA"/>
</dbReference>
<dbReference type="InterPro" id="IPR010994">
    <property type="entry name" value="RuvA_2-like"/>
</dbReference>
<dbReference type="NCBIfam" id="TIGR00084">
    <property type="entry name" value="ruvA"/>
    <property type="match status" value="1"/>
</dbReference>
<dbReference type="Pfam" id="PF14520">
    <property type="entry name" value="HHH_5"/>
    <property type="match status" value="1"/>
</dbReference>
<dbReference type="Pfam" id="PF01330">
    <property type="entry name" value="RuvA_N"/>
    <property type="match status" value="1"/>
</dbReference>
<dbReference type="SMART" id="SM00278">
    <property type="entry name" value="HhH1"/>
    <property type="match status" value="2"/>
</dbReference>
<dbReference type="SUPFAM" id="SSF50249">
    <property type="entry name" value="Nucleic acid-binding proteins"/>
    <property type="match status" value="1"/>
</dbReference>
<dbReference type="SUPFAM" id="SSF47781">
    <property type="entry name" value="RuvA domain 2-like"/>
    <property type="match status" value="1"/>
</dbReference>
<accession>B2S1L2</accession>
<protein>
    <recommendedName>
        <fullName evidence="1">Holliday junction branch migration complex subunit RuvA</fullName>
    </recommendedName>
</protein>
<comment type="function">
    <text evidence="1">The RuvA-RuvB-RuvC complex processes Holliday junction (HJ) DNA during genetic recombination and DNA repair, while the RuvA-RuvB complex plays an important role in the rescue of blocked DNA replication forks via replication fork reversal (RFR). RuvA specifically binds to HJ cruciform DNA, conferring on it an open structure. The RuvB hexamer acts as an ATP-dependent pump, pulling dsDNA into and through the RuvAB complex. HJ branch migration allows RuvC to scan DNA until it finds its consensus sequence, where it cleaves and resolves the cruciform DNA.</text>
</comment>
<comment type="subunit">
    <text evidence="1">Homotetramer. Forms an RuvA(8)-RuvB(12)-Holliday junction (HJ) complex. HJ DNA is sandwiched between 2 RuvA tetramers; dsDNA enters through RuvA and exits via RuvB. An RuvB hexamer assembles on each DNA strand where it exits the tetramer. Each RuvB hexamer is contacted by two RuvA subunits (via domain III) on 2 adjacent RuvB subunits; this complex drives branch migration. In the full resolvosome a probable DNA-RuvA(4)-RuvB(12)-RuvC(2) complex forms which resolves the HJ.</text>
</comment>
<comment type="subcellular location">
    <subcellularLocation>
        <location evidence="1">Cytoplasm</location>
    </subcellularLocation>
</comment>
<comment type="domain">
    <text evidence="1">Has three domains with a flexible linker between the domains II and III and assumes an 'L' shape. Domain III is highly mobile and contacts RuvB.</text>
</comment>
<comment type="similarity">
    <text evidence="1">Belongs to the RuvA family.</text>
</comment>
<name>RUVA_BORHD</name>
<organism>
    <name type="scientific">Borrelia hermsii (strain HS1 / DAH)</name>
    <dbReference type="NCBI Taxonomy" id="314723"/>
    <lineage>
        <taxon>Bacteria</taxon>
        <taxon>Pseudomonadati</taxon>
        <taxon>Spirochaetota</taxon>
        <taxon>Spirochaetia</taxon>
        <taxon>Spirochaetales</taxon>
        <taxon>Borreliaceae</taxon>
        <taxon>Borrelia</taxon>
    </lineage>
</organism>
<reference key="1">
    <citation type="submission" date="2004-12" db="EMBL/GenBank/DDBJ databases">
        <title>The genome sequence of Borrelia hermsii and Borrelia turicatae: comparative analysis of two agents of endemic N. America relapsing fever.</title>
        <authorList>
            <person name="Porcella S.F."/>
            <person name="Raffel S.J."/>
            <person name="Schrumpf M.E."/>
            <person name="Montgomery B."/>
            <person name="Smith T."/>
            <person name="Schwan T.G."/>
        </authorList>
    </citation>
    <scope>NUCLEOTIDE SEQUENCE [LARGE SCALE GENOMIC DNA]</scope>
    <source>
        <strain>HS1 / DAH</strain>
    </source>
</reference>
<evidence type="ECO:0000255" key="1">
    <source>
        <dbReference type="HAMAP-Rule" id="MF_00031"/>
    </source>
</evidence>
<proteinExistence type="inferred from homology"/>
<keyword id="KW-0963">Cytoplasm</keyword>
<keyword id="KW-0227">DNA damage</keyword>
<keyword id="KW-0233">DNA recombination</keyword>
<keyword id="KW-0234">DNA repair</keyword>
<keyword id="KW-0238">DNA-binding</keyword>
<feature type="chain" id="PRO_1000090285" description="Holliday junction branch migration complex subunit RuvA">
    <location>
        <begin position="1"/>
        <end position="196"/>
    </location>
</feature>
<feature type="region of interest" description="Domain I" evidence="1">
    <location>
        <begin position="1"/>
        <end position="63"/>
    </location>
</feature>
<feature type="region of interest" description="Domain II" evidence="1">
    <location>
        <begin position="64"/>
        <end position="138"/>
    </location>
</feature>
<feature type="region of interest" description="Flexible linker" evidence="1">
    <location>
        <position position="138"/>
    </location>
</feature>
<feature type="region of interest" description="Domain III" evidence="1">
    <location>
        <begin position="139"/>
        <end position="196"/>
    </location>
</feature>
<sequence length="196" mass="22628">MINKIYGKIIEKRESSIVIVALPFEFEVLVSSFCNAELRLLEDVEILTYLHLREDEIKLFGFLNVSEREVFEELISVDGIGPRAALRMLSGMKYDEFRDAIEREDVKRISTVKGIGNKVAGKIFLKLRGKLVKADELTSSVFKFKDLEQSIVNMGFDRKLVVAAIKEIMLIDEFLMLREVEQEQFLFRETLKRLSG</sequence>